<gene>
    <name type="ordered locus">LIC_10086</name>
</gene>
<feature type="chain" id="PRO_0000161991" description="Uncharacterized RNA methyltransferase LIC_10086">
    <location>
        <begin position="1"/>
        <end position="415"/>
    </location>
</feature>
<feature type="active site" description="Nucleophile" evidence="2">
    <location>
        <position position="371"/>
    </location>
</feature>
<feature type="binding site" evidence="1">
    <location>
        <position position="85"/>
    </location>
    <ligand>
        <name>[4Fe-4S] cluster</name>
        <dbReference type="ChEBI" id="CHEBI:49883"/>
    </ligand>
</feature>
<feature type="binding site" evidence="1">
    <location>
        <position position="91"/>
    </location>
    <ligand>
        <name>[4Fe-4S] cluster</name>
        <dbReference type="ChEBI" id="CHEBI:49883"/>
    </ligand>
</feature>
<feature type="binding site" evidence="1">
    <location>
        <position position="94"/>
    </location>
    <ligand>
        <name>[4Fe-4S] cluster</name>
        <dbReference type="ChEBI" id="CHEBI:49883"/>
    </ligand>
</feature>
<feature type="binding site" evidence="1">
    <location>
        <position position="175"/>
    </location>
    <ligand>
        <name>[4Fe-4S] cluster</name>
        <dbReference type="ChEBI" id="CHEBI:49883"/>
    </ligand>
</feature>
<feature type="binding site" evidence="2">
    <location>
        <position position="248"/>
    </location>
    <ligand>
        <name>S-adenosyl-L-methionine</name>
        <dbReference type="ChEBI" id="CHEBI:59789"/>
    </ligand>
</feature>
<feature type="binding site" evidence="2">
    <location>
        <position position="276"/>
    </location>
    <ligand>
        <name>S-adenosyl-L-methionine</name>
        <dbReference type="ChEBI" id="CHEBI:59789"/>
    </ligand>
</feature>
<feature type="binding site" evidence="2">
    <location>
        <position position="297"/>
    </location>
    <ligand>
        <name>S-adenosyl-L-methionine</name>
        <dbReference type="ChEBI" id="CHEBI:59789"/>
    </ligand>
</feature>
<feature type="binding site" evidence="2">
    <location>
        <position position="344"/>
    </location>
    <ligand>
        <name>S-adenosyl-L-methionine</name>
        <dbReference type="ChEBI" id="CHEBI:59789"/>
    </ligand>
</feature>
<proteinExistence type="inferred from homology"/>
<keyword id="KW-0004">4Fe-4S</keyword>
<keyword id="KW-0408">Iron</keyword>
<keyword id="KW-0411">Iron-sulfur</keyword>
<keyword id="KW-0479">Metal-binding</keyword>
<keyword id="KW-0489">Methyltransferase</keyword>
<keyword id="KW-0949">S-adenosyl-L-methionine</keyword>
<keyword id="KW-0808">Transferase</keyword>
<comment type="similarity">
    <text evidence="2">Belongs to the class I-like SAM-binding methyltransferase superfamily. RNA M5U methyltransferase family.</text>
</comment>
<accession>Q72W54</accession>
<dbReference type="EC" id="2.1.1.-"/>
<dbReference type="EMBL" id="AE016823">
    <property type="protein sequence ID" value="AAS68720.1"/>
    <property type="molecule type" value="Genomic_DNA"/>
</dbReference>
<dbReference type="RefSeq" id="WP_000834071.1">
    <property type="nucleotide sequence ID" value="NC_005823.1"/>
</dbReference>
<dbReference type="SMR" id="Q72W54"/>
<dbReference type="KEGG" id="lic:LIC_10086"/>
<dbReference type="HOGENOM" id="CLU_014689_7_0_12"/>
<dbReference type="Proteomes" id="UP000007037">
    <property type="component" value="Chromosome I"/>
</dbReference>
<dbReference type="GO" id="GO:0051539">
    <property type="term" value="F:4 iron, 4 sulfur cluster binding"/>
    <property type="evidence" value="ECO:0007669"/>
    <property type="project" value="UniProtKB-KW"/>
</dbReference>
<dbReference type="GO" id="GO:0046872">
    <property type="term" value="F:metal ion binding"/>
    <property type="evidence" value="ECO:0007669"/>
    <property type="project" value="UniProtKB-KW"/>
</dbReference>
<dbReference type="GO" id="GO:0070041">
    <property type="term" value="F:rRNA (uridine-C5-)-methyltransferase activity"/>
    <property type="evidence" value="ECO:0007669"/>
    <property type="project" value="TreeGrafter"/>
</dbReference>
<dbReference type="GO" id="GO:0070475">
    <property type="term" value="P:rRNA base methylation"/>
    <property type="evidence" value="ECO:0007669"/>
    <property type="project" value="TreeGrafter"/>
</dbReference>
<dbReference type="CDD" id="cd02440">
    <property type="entry name" value="AdoMet_MTases"/>
    <property type="match status" value="1"/>
</dbReference>
<dbReference type="Gene3D" id="2.40.50.1070">
    <property type="match status" value="1"/>
</dbReference>
<dbReference type="Gene3D" id="2.40.50.140">
    <property type="entry name" value="Nucleic acid-binding proteins"/>
    <property type="match status" value="1"/>
</dbReference>
<dbReference type="Gene3D" id="3.40.50.150">
    <property type="entry name" value="Vaccinia Virus protein VP39"/>
    <property type="match status" value="2"/>
</dbReference>
<dbReference type="InterPro" id="IPR030390">
    <property type="entry name" value="MeTrfase_TrmA_AS"/>
</dbReference>
<dbReference type="InterPro" id="IPR012340">
    <property type="entry name" value="NA-bd_OB-fold"/>
</dbReference>
<dbReference type="InterPro" id="IPR029063">
    <property type="entry name" value="SAM-dependent_MTases_sf"/>
</dbReference>
<dbReference type="InterPro" id="IPR010280">
    <property type="entry name" value="U5_MeTrfase_fam"/>
</dbReference>
<dbReference type="PANTHER" id="PTHR11061">
    <property type="entry name" value="RNA M5U METHYLTRANSFERASE"/>
    <property type="match status" value="1"/>
</dbReference>
<dbReference type="PANTHER" id="PTHR11061:SF30">
    <property type="entry name" value="TRNA (URACIL(54)-C(5))-METHYLTRANSFERASE"/>
    <property type="match status" value="1"/>
</dbReference>
<dbReference type="Pfam" id="PF05958">
    <property type="entry name" value="tRNA_U5-meth_tr"/>
    <property type="match status" value="1"/>
</dbReference>
<dbReference type="SUPFAM" id="SSF53335">
    <property type="entry name" value="S-adenosyl-L-methionine-dependent methyltransferases"/>
    <property type="match status" value="1"/>
</dbReference>
<dbReference type="PROSITE" id="PS51687">
    <property type="entry name" value="SAM_MT_RNA_M5U"/>
    <property type="match status" value="1"/>
</dbReference>
<dbReference type="PROSITE" id="PS01230">
    <property type="entry name" value="TRMA_1"/>
    <property type="match status" value="1"/>
</dbReference>
<name>Y086_LEPIC</name>
<sequence length="415" mass="47128">MKSDSEGHKSSSKIQIHKGKILLKPRSWVNLGYSIANSEKETFFLKNAIPGETVDTVLLKRSGSLFWGVASEIQEVSSERISSDCSIFPRCGGCSYRHVSYQKELEIKKFLLQETLEHFLSKKHIQIPEIEILSGDPNGYRNTAQIQLGFAGNQRLAGFYEEFSHSIVNLPEEGCKNLPQEMNFAFAEFLKQEVKGSKQILKSKTLSFRLEGTKVISYKKKSVSFSENIRIPELKKIVWEIPAGGFSQVNRYLIAPWLEKIFELVPNNQNRILELYCGSGLIAIALKSKTTSWLGYEISSDCVQQAKRNVLLNGISSCDFKTLNLETDWIDSEEVLNSSFWIMNPPRAGLSKKVLQTLIKTSPNGFLYSSCNHSTLVRDLSLFLNKDYKLSNVTLVDFFPRTKHFEVIVKVEKKD</sequence>
<reference key="1">
    <citation type="journal article" date="2004" name="J. Bacteriol.">
        <title>Comparative genomics of two Leptospira interrogans serovars reveals novel insights into physiology and pathogenesis.</title>
        <authorList>
            <person name="Nascimento A.L.T.O."/>
            <person name="Ko A.I."/>
            <person name="Martins E.A.L."/>
            <person name="Monteiro-Vitorello C.B."/>
            <person name="Ho P.L."/>
            <person name="Haake D.A."/>
            <person name="Verjovski-Almeida S."/>
            <person name="Hartskeerl R.A."/>
            <person name="Marques M.V."/>
            <person name="Oliveira M.C."/>
            <person name="Menck C.F.M."/>
            <person name="Leite L.C.C."/>
            <person name="Carrer H."/>
            <person name="Coutinho L.L."/>
            <person name="Degrave W.M."/>
            <person name="Dellagostin O.A."/>
            <person name="El-Dorry H."/>
            <person name="Ferro E.S."/>
            <person name="Ferro M.I.T."/>
            <person name="Furlan L.R."/>
            <person name="Gamberini M."/>
            <person name="Giglioti E.A."/>
            <person name="Goes-Neto A."/>
            <person name="Goldman G.H."/>
            <person name="Goldman M.H.S."/>
            <person name="Harakava R."/>
            <person name="Jeronimo S.M.B."/>
            <person name="Junqueira-de-Azevedo I.L.M."/>
            <person name="Kimura E.T."/>
            <person name="Kuramae E.E."/>
            <person name="Lemos E.G.M."/>
            <person name="Lemos M.V.F."/>
            <person name="Marino C.L."/>
            <person name="Nunes L.R."/>
            <person name="de Oliveira R.C."/>
            <person name="Pereira G.G."/>
            <person name="Reis M.S."/>
            <person name="Schriefer A."/>
            <person name="Siqueira W.J."/>
            <person name="Sommer P."/>
            <person name="Tsai S.M."/>
            <person name="Simpson A.J.G."/>
            <person name="Ferro J.A."/>
            <person name="Camargo L.E.A."/>
            <person name="Kitajima J.P."/>
            <person name="Setubal J.C."/>
            <person name="Van Sluys M.A."/>
        </authorList>
    </citation>
    <scope>NUCLEOTIDE SEQUENCE [LARGE SCALE GENOMIC DNA]</scope>
    <source>
        <strain>Fiocruz L1-130</strain>
    </source>
</reference>
<evidence type="ECO:0000250" key="1"/>
<evidence type="ECO:0000255" key="2">
    <source>
        <dbReference type="PROSITE-ProRule" id="PRU01024"/>
    </source>
</evidence>
<organism>
    <name type="scientific">Leptospira interrogans serogroup Icterohaemorrhagiae serovar copenhageni (strain Fiocruz L1-130)</name>
    <dbReference type="NCBI Taxonomy" id="267671"/>
    <lineage>
        <taxon>Bacteria</taxon>
        <taxon>Pseudomonadati</taxon>
        <taxon>Spirochaetota</taxon>
        <taxon>Spirochaetia</taxon>
        <taxon>Leptospirales</taxon>
        <taxon>Leptospiraceae</taxon>
        <taxon>Leptospira</taxon>
    </lineage>
</organism>
<protein>
    <recommendedName>
        <fullName>Uncharacterized RNA methyltransferase LIC_10086</fullName>
        <ecNumber>2.1.1.-</ecNumber>
    </recommendedName>
</protein>